<evidence type="ECO:0000255" key="1">
    <source>
        <dbReference type="HAMAP-Rule" id="MF_01026"/>
    </source>
</evidence>
<feature type="chain" id="PRO_0000076788" description="3-isopropylmalate dehydratase large subunit">
    <location>
        <begin position="1"/>
        <end position="474"/>
    </location>
</feature>
<feature type="binding site" evidence="1">
    <location>
        <position position="352"/>
    </location>
    <ligand>
        <name>[4Fe-4S] cluster</name>
        <dbReference type="ChEBI" id="CHEBI:49883"/>
    </ligand>
</feature>
<feature type="binding site" evidence="1">
    <location>
        <position position="413"/>
    </location>
    <ligand>
        <name>[4Fe-4S] cluster</name>
        <dbReference type="ChEBI" id="CHEBI:49883"/>
    </ligand>
</feature>
<feature type="binding site" evidence="1">
    <location>
        <position position="416"/>
    </location>
    <ligand>
        <name>[4Fe-4S] cluster</name>
        <dbReference type="ChEBI" id="CHEBI:49883"/>
    </ligand>
</feature>
<protein>
    <recommendedName>
        <fullName evidence="1">3-isopropylmalate dehydratase large subunit</fullName>
        <ecNumber evidence="1">4.2.1.33</ecNumber>
    </recommendedName>
    <alternativeName>
        <fullName evidence="1">Alpha-IPM isomerase</fullName>
        <shortName evidence="1">IPMI</shortName>
    </alternativeName>
    <alternativeName>
        <fullName evidence="1">Isopropylmalate isomerase</fullName>
    </alternativeName>
</protein>
<reference key="1">
    <citation type="journal article" date="2005" name="Proc. Natl. Acad. Sci. U.S.A.">
        <title>Comparison of the complete genome sequences of Pseudomonas syringae pv. syringae B728a and pv. tomato DC3000.</title>
        <authorList>
            <person name="Feil H."/>
            <person name="Feil W.S."/>
            <person name="Chain P."/>
            <person name="Larimer F."/>
            <person name="Dibartolo G."/>
            <person name="Copeland A."/>
            <person name="Lykidis A."/>
            <person name="Trong S."/>
            <person name="Nolan M."/>
            <person name="Goltsman E."/>
            <person name="Thiel J."/>
            <person name="Malfatti S."/>
            <person name="Loper J.E."/>
            <person name="Lapidus A."/>
            <person name="Detter J.C."/>
            <person name="Land M."/>
            <person name="Richardson P.M."/>
            <person name="Kyrpides N.C."/>
            <person name="Ivanova N."/>
            <person name="Lindow S.E."/>
        </authorList>
    </citation>
    <scope>NUCLEOTIDE SEQUENCE [LARGE SCALE GENOMIC DNA]</scope>
    <source>
        <strain>B728a</strain>
    </source>
</reference>
<keyword id="KW-0004">4Fe-4S</keyword>
<keyword id="KW-0028">Amino-acid biosynthesis</keyword>
<keyword id="KW-0100">Branched-chain amino acid biosynthesis</keyword>
<keyword id="KW-0408">Iron</keyword>
<keyword id="KW-0411">Iron-sulfur</keyword>
<keyword id="KW-0432">Leucine biosynthesis</keyword>
<keyword id="KW-0456">Lyase</keyword>
<keyword id="KW-0479">Metal-binding</keyword>
<proteinExistence type="inferred from homology"/>
<comment type="function">
    <text evidence="1">Catalyzes the isomerization between 2-isopropylmalate and 3-isopropylmalate, via the formation of 2-isopropylmaleate.</text>
</comment>
<comment type="catalytic activity">
    <reaction evidence="1">
        <text>(2R,3S)-3-isopropylmalate = (2S)-2-isopropylmalate</text>
        <dbReference type="Rhea" id="RHEA:32287"/>
        <dbReference type="ChEBI" id="CHEBI:1178"/>
        <dbReference type="ChEBI" id="CHEBI:35121"/>
        <dbReference type="EC" id="4.2.1.33"/>
    </reaction>
</comment>
<comment type="cofactor">
    <cofactor evidence="1">
        <name>[4Fe-4S] cluster</name>
        <dbReference type="ChEBI" id="CHEBI:49883"/>
    </cofactor>
    <text evidence="1">Binds 1 [4Fe-4S] cluster per subunit.</text>
</comment>
<comment type="pathway">
    <text evidence="1">Amino-acid biosynthesis; L-leucine biosynthesis; L-leucine from 3-methyl-2-oxobutanoate: step 2/4.</text>
</comment>
<comment type="subunit">
    <text evidence="1">Heterodimer of LeuC and LeuD.</text>
</comment>
<comment type="similarity">
    <text evidence="1">Belongs to the aconitase/IPM isomerase family. LeuC type 1 subfamily.</text>
</comment>
<sequence length="474" mass="50968">MAGKTLYDKLWDSHLVKQRDDGSALIYIDRHIIHEVTSPQAFEGLRLAKRKPWRIDSIIATPDHNVPTTAERKGGIGAIEDQVSRLQVQTLDDNCDEYGITEFKMNDPRQGIVHVIGPEQGATLPGMSVVCGDSHTSTHGAFGALAHGIGTSEVEHVLATQCLVAKKMKNMLVSVEGQLPFGVTAKDIVLAVIGKIGTAGGNGYAIEFAGSAIRDLSIEGRMTICNMSIEAGARVGMVATDEKTVEYVKGRPFAPKGAEWDLAVEAWKDLVSDPDAVFDTVVRLDAAQIKPQVSWGTSPEMVLAVDQNVPDPAQEPDLVKRGSIERALKYMGLKANQPITDIQLDRVFIGSCTNSRIEDLRAAADVAKGRKVASTIKQAIVVPGSGLIKAQAEKEGLDKVFIEAGFEWREPGCSMCLAMNPDRLGSGEHCASTSNRNFEGRQGAGGRTHLVSPAMAAAAAVNGRFIDVRDLIQH</sequence>
<dbReference type="EC" id="4.2.1.33" evidence="1"/>
<dbReference type="EMBL" id="CP000075">
    <property type="protein sequence ID" value="AAY37026.1"/>
    <property type="molecule type" value="Genomic_DNA"/>
</dbReference>
<dbReference type="RefSeq" id="WP_003406190.1">
    <property type="nucleotide sequence ID" value="NC_007005.1"/>
</dbReference>
<dbReference type="RefSeq" id="YP_235064.1">
    <property type="nucleotide sequence ID" value="NC_007005.1"/>
</dbReference>
<dbReference type="SMR" id="Q4ZUZ6"/>
<dbReference type="STRING" id="205918.Psyr_1983"/>
<dbReference type="KEGG" id="psb:Psyr_1983"/>
<dbReference type="PATRIC" id="fig|205918.7.peg.2026"/>
<dbReference type="eggNOG" id="COG0065">
    <property type="taxonomic scope" value="Bacteria"/>
</dbReference>
<dbReference type="HOGENOM" id="CLU_006714_3_4_6"/>
<dbReference type="OrthoDB" id="9802769at2"/>
<dbReference type="UniPathway" id="UPA00048">
    <property type="reaction ID" value="UER00071"/>
</dbReference>
<dbReference type="Proteomes" id="UP000000426">
    <property type="component" value="Chromosome"/>
</dbReference>
<dbReference type="GO" id="GO:0003861">
    <property type="term" value="F:3-isopropylmalate dehydratase activity"/>
    <property type="evidence" value="ECO:0007669"/>
    <property type="project" value="UniProtKB-UniRule"/>
</dbReference>
<dbReference type="GO" id="GO:0051539">
    <property type="term" value="F:4 iron, 4 sulfur cluster binding"/>
    <property type="evidence" value="ECO:0007669"/>
    <property type="project" value="UniProtKB-KW"/>
</dbReference>
<dbReference type="GO" id="GO:0046872">
    <property type="term" value="F:metal ion binding"/>
    <property type="evidence" value="ECO:0007669"/>
    <property type="project" value="UniProtKB-KW"/>
</dbReference>
<dbReference type="GO" id="GO:0009098">
    <property type="term" value="P:L-leucine biosynthetic process"/>
    <property type="evidence" value="ECO:0007669"/>
    <property type="project" value="UniProtKB-UniRule"/>
</dbReference>
<dbReference type="CDD" id="cd01583">
    <property type="entry name" value="IPMI"/>
    <property type="match status" value="1"/>
</dbReference>
<dbReference type="FunFam" id="3.30.499.10:FF:000007">
    <property type="entry name" value="3-isopropylmalate dehydratase large subunit"/>
    <property type="match status" value="1"/>
</dbReference>
<dbReference type="Gene3D" id="3.30.499.10">
    <property type="entry name" value="Aconitase, domain 3"/>
    <property type="match status" value="2"/>
</dbReference>
<dbReference type="HAMAP" id="MF_01026">
    <property type="entry name" value="LeuC_type1"/>
    <property type="match status" value="1"/>
</dbReference>
<dbReference type="InterPro" id="IPR004430">
    <property type="entry name" value="3-IsopropMal_deHydase_lsu"/>
</dbReference>
<dbReference type="InterPro" id="IPR015931">
    <property type="entry name" value="Acnase/IPM_dHydase_lsu_aba_1/3"/>
</dbReference>
<dbReference type="InterPro" id="IPR001030">
    <property type="entry name" value="Acoase/IPM_deHydtase_lsu_aba"/>
</dbReference>
<dbReference type="InterPro" id="IPR018136">
    <property type="entry name" value="Aconitase_4Fe-4S_BS"/>
</dbReference>
<dbReference type="InterPro" id="IPR036008">
    <property type="entry name" value="Aconitase_4Fe-4S_dom"/>
</dbReference>
<dbReference type="InterPro" id="IPR050067">
    <property type="entry name" value="IPM_dehydratase_rel_enz"/>
</dbReference>
<dbReference type="InterPro" id="IPR033941">
    <property type="entry name" value="IPMI_cat"/>
</dbReference>
<dbReference type="NCBIfam" id="TIGR00170">
    <property type="entry name" value="leuC"/>
    <property type="match status" value="1"/>
</dbReference>
<dbReference type="NCBIfam" id="NF004016">
    <property type="entry name" value="PRK05478.1"/>
    <property type="match status" value="1"/>
</dbReference>
<dbReference type="NCBIfam" id="NF009116">
    <property type="entry name" value="PRK12466.1"/>
    <property type="match status" value="1"/>
</dbReference>
<dbReference type="PANTHER" id="PTHR43822:SF9">
    <property type="entry name" value="3-ISOPROPYLMALATE DEHYDRATASE"/>
    <property type="match status" value="1"/>
</dbReference>
<dbReference type="PANTHER" id="PTHR43822">
    <property type="entry name" value="HOMOACONITASE, MITOCHONDRIAL-RELATED"/>
    <property type="match status" value="1"/>
</dbReference>
<dbReference type="Pfam" id="PF00330">
    <property type="entry name" value="Aconitase"/>
    <property type="match status" value="1"/>
</dbReference>
<dbReference type="PRINTS" id="PR00415">
    <property type="entry name" value="ACONITASE"/>
</dbReference>
<dbReference type="SUPFAM" id="SSF53732">
    <property type="entry name" value="Aconitase iron-sulfur domain"/>
    <property type="match status" value="1"/>
</dbReference>
<dbReference type="PROSITE" id="PS00450">
    <property type="entry name" value="ACONITASE_1"/>
    <property type="match status" value="1"/>
</dbReference>
<dbReference type="PROSITE" id="PS01244">
    <property type="entry name" value="ACONITASE_2"/>
    <property type="match status" value="1"/>
</dbReference>
<organism>
    <name type="scientific">Pseudomonas syringae pv. syringae (strain B728a)</name>
    <dbReference type="NCBI Taxonomy" id="205918"/>
    <lineage>
        <taxon>Bacteria</taxon>
        <taxon>Pseudomonadati</taxon>
        <taxon>Pseudomonadota</taxon>
        <taxon>Gammaproteobacteria</taxon>
        <taxon>Pseudomonadales</taxon>
        <taxon>Pseudomonadaceae</taxon>
        <taxon>Pseudomonas</taxon>
        <taxon>Pseudomonas syringae</taxon>
    </lineage>
</organism>
<name>LEUC_PSEU2</name>
<gene>
    <name evidence="1" type="primary">leuC</name>
    <name type="ordered locus">Psyr_1983</name>
</gene>
<accession>Q4ZUZ6</accession>